<proteinExistence type="inferred from homology"/>
<feature type="chain" id="PRO_0000381568" description="Biotin synthase">
    <location>
        <begin position="1"/>
        <end position="378"/>
    </location>
</feature>
<feature type="domain" description="Radical SAM core" evidence="2">
    <location>
        <begin position="68"/>
        <end position="292"/>
    </location>
</feature>
<feature type="binding site" evidence="1">
    <location>
        <position position="83"/>
    </location>
    <ligand>
        <name>[4Fe-4S] cluster</name>
        <dbReference type="ChEBI" id="CHEBI:49883"/>
        <note>4Fe-4S-S-AdoMet</note>
    </ligand>
</feature>
<feature type="binding site" evidence="1">
    <location>
        <position position="87"/>
    </location>
    <ligand>
        <name>[4Fe-4S] cluster</name>
        <dbReference type="ChEBI" id="CHEBI:49883"/>
        <note>4Fe-4S-S-AdoMet</note>
    </ligand>
</feature>
<feature type="binding site" evidence="1">
    <location>
        <position position="90"/>
    </location>
    <ligand>
        <name>[4Fe-4S] cluster</name>
        <dbReference type="ChEBI" id="CHEBI:49883"/>
        <note>4Fe-4S-S-AdoMet</note>
    </ligand>
</feature>
<feature type="binding site" evidence="1">
    <location>
        <position position="129"/>
    </location>
    <ligand>
        <name>[2Fe-2S] cluster</name>
        <dbReference type="ChEBI" id="CHEBI:190135"/>
    </ligand>
</feature>
<feature type="binding site" evidence="1">
    <location>
        <position position="160"/>
    </location>
    <ligand>
        <name>[2Fe-2S] cluster</name>
        <dbReference type="ChEBI" id="CHEBI:190135"/>
    </ligand>
</feature>
<feature type="binding site" evidence="1">
    <location>
        <position position="220"/>
    </location>
    <ligand>
        <name>[2Fe-2S] cluster</name>
        <dbReference type="ChEBI" id="CHEBI:190135"/>
    </ligand>
</feature>
<feature type="binding site" evidence="1">
    <location>
        <position position="296"/>
    </location>
    <ligand>
        <name>[2Fe-2S] cluster</name>
        <dbReference type="ChEBI" id="CHEBI:190135"/>
    </ligand>
</feature>
<name>BIOB_PSYA2</name>
<reference key="1">
    <citation type="journal article" date="2010" name="Appl. Environ. Microbiol.">
        <title>The genome sequence of Psychrobacter arcticus 273-4, a psychroactive Siberian permafrost bacterium, reveals mechanisms for adaptation to low-temperature growth.</title>
        <authorList>
            <person name="Ayala-del-Rio H.L."/>
            <person name="Chain P.S."/>
            <person name="Grzymski J.J."/>
            <person name="Ponder M.A."/>
            <person name="Ivanova N."/>
            <person name="Bergholz P.W."/>
            <person name="Di Bartolo G."/>
            <person name="Hauser L."/>
            <person name="Land M."/>
            <person name="Bakermans C."/>
            <person name="Rodrigues D."/>
            <person name="Klappenbach J."/>
            <person name="Zarka D."/>
            <person name="Larimer F."/>
            <person name="Richardson P."/>
            <person name="Murray A."/>
            <person name="Thomashow M."/>
            <person name="Tiedje J.M."/>
        </authorList>
    </citation>
    <scope>NUCLEOTIDE SEQUENCE [LARGE SCALE GENOMIC DNA]</scope>
    <source>
        <strain>DSM 17307 / VKM B-2377 / 273-4</strain>
    </source>
</reference>
<sequence>MSALLNITEPNNNTNTKNDHFLASLTTDATQSTASKYSREQIAQLFDLPLMDLLLQAQTIHRQNFTANEVQISTLLSIKTGNCPEDCGYCSQSGHHRDKTELVAEKRIEVSKVIAAAKRAKATGSSRFCMGAAWKHPSAKDMPYVVELVKEVKALGLETCMTLGMLDTDQAAQLANAGLDYYNHNLDTSRSYYEQVVSTRSYDERLDTIANVRNSGINVCSGNIVGMGESRDDRIDWVHELLKMPKAPESIPVNLLVPIQGTPIGDKVLAEGQLSVLEWIRTIAVTRICCPSSYVRLSAGRESLSDAEQALAFMAGANSFFYGDKLLTTGNASQSGDDRLMRELGLTKQFSAPRLPKQVPVLDAMSGHQSQVILASLS</sequence>
<gene>
    <name evidence="1" type="primary">bioB</name>
    <name type="ordered locus">Psyc_1861</name>
</gene>
<evidence type="ECO:0000255" key="1">
    <source>
        <dbReference type="HAMAP-Rule" id="MF_01694"/>
    </source>
</evidence>
<evidence type="ECO:0000255" key="2">
    <source>
        <dbReference type="PROSITE-ProRule" id="PRU01266"/>
    </source>
</evidence>
<accession>Q4FQJ9</accession>
<keyword id="KW-0001">2Fe-2S</keyword>
<keyword id="KW-0004">4Fe-4S</keyword>
<keyword id="KW-0093">Biotin biosynthesis</keyword>
<keyword id="KW-0408">Iron</keyword>
<keyword id="KW-0411">Iron-sulfur</keyword>
<keyword id="KW-0479">Metal-binding</keyword>
<keyword id="KW-1185">Reference proteome</keyword>
<keyword id="KW-0949">S-adenosyl-L-methionine</keyword>
<keyword id="KW-0808">Transferase</keyword>
<comment type="function">
    <text evidence="1">Catalyzes the conversion of dethiobiotin (DTB) to biotin by the insertion of a sulfur atom into dethiobiotin via a radical-based mechanism.</text>
</comment>
<comment type="catalytic activity">
    <reaction evidence="1">
        <text>(4R,5S)-dethiobiotin + (sulfur carrier)-SH + 2 reduced [2Fe-2S]-[ferredoxin] + 2 S-adenosyl-L-methionine = (sulfur carrier)-H + biotin + 2 5'-deoxyadenosine + 2 L-methionine + 2 oxidized [2Fe-2S]-[ferredoxin]</text>
        <dbReference type="Rhea" id="RHEA:22060"/>
        <dbReference type="Rhea" id="RHEA-COMP:10000"/>
        <dbReference type="Rhea" id="RHEA-COMP:10001"/>
        <dbReference type="Rhea" id="RHEA-COMP:14737"/>
        <dbReference type="Rhea" id="RHEA-COMP:14739"/>
        <dbReference type="ChEBI" id="CHEBI:17319"/>
        <dbReference type="ChEBI" id="CHEBI:29917"/>
        <dbReference type="ChEBI" id="CHEBI:33737"/>
        <dbReference type="ChEBI" id="CHEBI:33738"/>
        <dbReference type="ChEBI" id="CHEBI:57586"/>
        <dbReference type="ChEBI" id="CHEBI:57844"/>
        <dbReference type="ChEBI" id="CHEBI:59789"/>
        <dbReference type="ChEBI" id="CHEBI:64428"/>
        <dbReference type="ChEBI" id="CHEBI:149473"/>
        <dbReference type="EC" id="2.8.1.6"/>
    </reaction>
</comment>
<comment type="cofactor">
    <cofactor evidence="1">
        <name>[4Fe-4S] cluster</name>
        <dbReference type="ChEBI" id="CHEBI:49883"/>
    </cofactor>
    <text evidence="1">Binds 1 [4Fe-4S] cluster. The cluster is coordinated with 3 cysteines and an exchangeable S-adenosyl-L-methionine.</text>
</comment>
<comment type="cofactor">
    <cofactor evidence="1">
        <name>[2Fe-2S] cluster</name>
        <dbReference type="ChEBI" id="CHEBI:190135"/>
    </cofactor>
    <text evidence="1">Binds 1 [2Fe-2S] cluster. The cluster is coordinated with 3 cysteines and 1 arginine.</text>
</comment>
<comment type="pathway">
    <text evidence="1">Cofactor biosynthesis; biotin biosynthesis; biotin from 7,8-diaminononanoate: step 2/2.</text>
</comment>
<comment type="subunit">
    <text evidence="1">Homodimer.</text>
</comment>
<comment type="similarity">
    <text evidence="1">Belongs to the radical SAM superfamily. Biotin synthase family.</text>
</comment>
<organism>
    <name type="scientific">Psychrobacter arcticus (strain DSM 17307 / VKM B-2377 / 273-4)</name>
    <dbReference type="NCBI Taxonomy" id="259536"/>
    <lineage>
        <taxon>Bacteria</taxon>
        <taxon>Pseudomonadati</taxon>
        <taxon>Pseudomonadota</taxon>
        <taxon>Gammaproteobacteria</taxon>
        <taxon>Moraxellales</taxon>
        <taxon>Moraxellaceae</taxon>
        <taxon>Psychrobacter</taxon>
    </lineage>
</organism>
<protein>
    <recommendedName>
        <fullName evidence="1">Biotin synthase</fullName>
        <ecNumber evidence="1">2.8.1.6</ecNumber>
    </recommendedName>
</protein>
<dbReference type="EC" id="2.8.1.6" evidence="1"/>
<dbReference type="EMBL" id="CP000082">
    <property type="protein sequence ID" value="AAZ19709.1"/>
    <property type="molecule type" value="Genomic_DNA"/>
</dbReference>
<dbReference type="RefSeq" id="WP_011281119.1">
    <property type="nucleotide sequence ID" value="NC_007204.1"/>
</dbReference>
<dbReference type="SMR" id="Q4FQJ9"/>
<dbReference type="STRING" id="259536.Psyc_1861"/>
<dbReference type="KEGG" id="par:Psyc_1861"/>
<dbReference type="eggNOG" id="COG0502">
    <property type="taxonomic scope" value="Bacteria"/>
</dbReference>
<dbReference type="HOGENOM" id="CLU_033172_1_2_6"/>
<dbReference type="OrthoDB" id="9786826at2"/>
<dbReference type="UniPathway" id="UPA00078">
    <property type="reaction ID" value="UER00162"/>
</dbReference>
<dbReference type="Proteomes" id="UP000000546">
    <property type="component" value="Chromosome"/>
</dbReference>
<dbReference type="GO" id="GO:0051537">
    <property type="term" value="F:2 iron, 2 sulfur cluster binding"/>
    <property type="evidence" value="ECO:0007669"/>
    <property type="project" value="UniProtKB-KW"/>
</dbReference>
<dbReference type="GO" id="GO:0051539">
    <property type="term" value="F:4 iron, 4 sulfur cluster binding"/>
    <property type="evidence" value="ECO:0007669"/>
    <property type="project" value="UniProtKB-KW"/>
</dbReference>
<dbReference type="GO" id="GO:0004076">
    <property type="term" value="F:biotin synthase activity"/>
    <property type="evidence" value="ECO:0007669"/>
    <property type="project" value="UniProtKB-UniRule"/>
</dbReference>
<dbReference type="GO" id="GO:0005506">
    <property type="term" value="F:iron ion binding"/>
    <property type="evidence" value="ECO:0007669"/>
    <property type="project" value="UniProtKB-UniRule"/>
</dbReference>
<dbReference type="GO" id="GO:0009102">
    <property type="term" value="P:biotin biosynthetic process"/>
    <property type="evidence" value="ECO:0007669"/>
    <property type="project" value="UniProtKB-UniRule"/>
</dbReference>
<dbReference type="CDD" id="cd01335">
    <property type="entry name" value="Radical_SAM"/>
    <property type="match status" value="1"/>
</dbReference>
<dbReference type="Gene3D" id="3.20.20.70">
    <property type="entry name" value="Aldolase class I"/>
    <property type="match status" value="1"/>
</dbReference>
<dbReference type="HAMAP" id="MF_01694">
    <property type="entry name" value="BioB"/>
    <property type="match status" value="1"/>
</dbReference>
<dbReference type="InterPro" id="IPR013785">
    <property type="entry name" value="Aldolase_TIM"/>
</dbReference>
<dbReference type="InterPro" id="IPR010722">
    <property type="entry name" value="BATS_dom"/>
</dbReference>
<dbReference type="InterPro" id="IPR002684">
    <property type="entry name" value="Biotin_synth/BioAB"/>
</dbReference>
<dbReference type="InterPro" id="IPR024177">
    <property type="entry name" value="Biotin_synthase"/>
</dbReference>
<dbReference type="InterPro" id="IPR006638">
    <property type="entry name" value="Elp3/MiaA/NifB-like_rSAM"/>
</dbReference>
<dbReference type="InterPro" id="IPR007197">
    <property type="entry name" value="rSAM"/>
</dbReference>
<dbReference type="NCBIfam" id="TIGR00433">
    <property type="entry name" value="bioB"/>
    <property type="match status" value="1"/>
</dbReference>
<dbReference type="PANTHER" id="PTHR22976">
    <property type="entry name" value="BIOTIN SYNTHASE"/>
    <property type="match status" value="1"/>
</dbReference>
<dbReference type="PANTHER" id="PTHR22976:SF2">
    <property type="entry name" value="BIOTIN SYNTHASE, MITOCHONDRIAL"/>
    <property type="match status" value="1"/>
</dbReference>
<dbReference type="Pfam" id="PF06968">
    <property type="entry name" value="BATS"/>
    <property type="match status" value="1"/>
</dbReference>
<dbReference type="Pfam" id="PF04055">
    <property type="entry name" value="Radical_SAM"/>
    <property type="match status" value="1"/>
</dbReference>
<dbReference type="PIRSF" id="PIRSF001619">
    <property type="entry name" value="Biotin_synth"/>
    <property type="match status" value="1"/>
</dbReference>
<dbReference type="SFLD" id="SFLDG01060">
    <property type="entry name" value="BATS_domain_containing"/>
    <property type="match status" value="1"/>
</dbReference>
<dbReference type="SFLD" id="SFLDF00272">
    <property type="entry name" value="biotin_synthase"/>
    <property type="match status" value="1"/>
</dbReference>
<dbReference type="SMART" id="SM00876">
    <property type="entry name" value="BATS"/>
    <property type="match status" value="1"/>
</dbReference>
<dbReference type="SMART" id="SM00729">
    <property type="entry name" value="Elp3"/>
    <property type="match status" value="1"/>
</dbReference>
<dbReference type="SUPFAM" id="SSF102114">
    <property type="entry name" value="Radical SAM enzymes"/>
    <property type="match status" value="1"/>
</dbReference>
<dbReference type="PROSITE" id="PS51918">
    <property type="entry name" value="RADICAL_SAM"/>
    <property type="match status" value="1"/>
</dbReference>